<keyword id="KW-0963">Cytoplasm</keyword>
<keyword id="KW-0489">Methyltransferase</keyword>
<keyword id="KW-0698">rRNA processing</keyword>
<keyword id="KW-0949">S-adenosyl-L-methionine</keyword>
<keyword id="KW-0808">Transferase</keyword>
<feature type="chain" id="PRO_1000117071" description="Ribosomal RNA small subunit methyltransferase G">
    <location>
        <begin position="1"/>
        <end position="207"/>
    </location>
</feature>
<feature type="binding site" evidence="1">
    <location>
        <position position="73"/>
    </location>
    <ligand>
        <name>S-adenosyl-L-methionine</name>
        <dbReference type="ChEBI" id="CHEBI:59789"/>
    </ligand>
</feature>
<feature type="binding site" evidence="1">
    <location>
        <position position="78"/>
    </location>
    <ligand>
        <name>S-adenosyl-L-methionine</name>
        <dbReference type="ChEBI" id="CHEBI:59789"/>
    </ligand>
</feature>
<feature type="binding site" evidence="1">
    <location>
        <begin position="124"/>
        <end position="125"/>
    </location>
    <ligand>
        <name>S-adenosyl-L-methionine</name>
        <dbReference type="ChEBI" id="CHEBI:59789"/>
    </ligand>
</feature>
<feature type="binding site" evidence="1">
    <location>
        <position position="139"/>
    </location>
    <ligand>
        <name>S-adenosyl-L-methionine</name>
        <dbReference type="ChEBI" id="CHEBI:59789"/>
    </ligand>
</feature>
<accession>B7LK85</accession>
<comment type="function">
    <text evidence="1">Specifically methylates the N7 position of guanine in position 527 of 16S rRNA.</text>
</comment>
<comment type="catalytic activity">
    <reaction evidence="1">
        <text>guanosine(527) in 16S rRNA + S-adenosyl-L-methionine = N(7)-methylguanosine(527) in 16S rRNA + S-adenosyl-L-homocysteine</text>
        <dbReference type="Rhea" id="RHEA:42732"/>
        <dbReference type="Rhea" id="RHEA-COMP:10209"/>
        <dbReference type="Rhea" id="RHEA-COMP:10210"/>
        <dbReference type="ChEBI" id="CHEBI:57856"/>
        <dbReference type="ChEBI" id="CHEBI:59789"/>
        <dbReference type="ChEBI" id="CHEBI:74269"/>
        <dbReference type="ChEBI" id="CHEBI:74480"/>
        <dbReference type="EC" id="2.1.1.170"/>
    </reaction>
</comment>
<comment type="subcellular location">
    <subcellularLocation>
        <location evidence="1">Cytoplasm</location>
    </subcellularLocation>
</comment>
<comment type="similarity">
    <text evidence="1">Belongs to the methyltransferase superfamily. RNA methyltransferase RsmG family.</text>
</comment>
<name>RSMG_ESCF3</name>
<sequence length="207" mass="23304">MLNKLSSLLKDAGISLTDHQKNQLIAYVNMLHKWNKAYNLTSVRDPNEMLVRHILDSIVVAPYLQGERFIDVGTGPGLPGIPLSIVRPEAHFTLLDSLGKRVRFLRQVQHELKLDNITPVQSRVEVFPAEPPFDGVISRAFASLDDMLNWCHHLPGPSGRYYALKGQLPEDEIASLPKEFQVESVVKLHVPGLEGERHLVVIKPNRI</sequence>
<proteinExistence type="inferred from homology"/>
<dbReference type="EC" id="2.1.1.170" evidence="1"/>
<dbReference type="EMBL" id="CU928158">
    <property type="protein sequence ID" value="CAQ91473.1"/>
    <property type="molecule type" value="Genomic_DNA"/>
</dbReference>
<dbReference type="RefSeq" id="WP_000932854.1">
    <property type="nucleotide sequence ID" value="NC_011740.1"/>
</dbReference>
<dbReference type="SMR" id="B7LK85"/>
<dbReference type="GeneID" id="75059633"/>
<dbReference type="KEGG" id="efe:EFER_4039"/>
<dbReference type="HOGENOM" id="CLU_065341_2_2_6"/>
<dbReference type="OrthoDB" id="9808773at2"/>
<dbReference type="Proteomes" id="UP000000745">
    <property type="component" value="Chromosome"/>
</dbReference>
<dbReference type="GO" id="GO:0005829">
    <property type="term" value="C:cytosol"/>
    <property type="evidence" value="ECO:0007669"/>
    <property type="project" value="TreeGrafter"/>
</dbReference>
<dbReference type="GO" id="GO:0070043">
    <property type="term" value="F:rRNA (guanine-N7-)-methyltransferase activity"/>
    <property type="evidence" value="ECO:0007669"/>
    <property type="project" value="UniProtKB-UniRule"/>
</dbReference>
<dbReference type="CDD" id="cd02440">
    <property type="entry name" value="AdoMet_MTases"/>
    <property type="match status" value="1"/>
</dbReference>
<dbReference type="FunFam" id="3.40.50.150:FF:000032">
    <property type="entry name" value="Ribosomal RNA small subunit methyltransferase G"/>
    <property type="match status" value="1"/>
</dbReference>
<dbReference type="Gene3D" id="3.40.50.150">
    <property type="entry name" value="Vaccinia Virus protein VP39"/>
    <property type="match status" value="1"/>
</dbReference>
<dbReference type="HAMAP" id="MF_00074">
    <property type="entry name" value="16SrRNA_methyltr_G"/>
    <property type="match status" value="1"/>
</dbReference>
<dbReference type="InterPro" id="IPR003682">
    <property type="entry name" value="rRNA_ssu_MeTfrase_G"/>
</dbReference>
<dbReference type="InterPro" id="IPR029063">
    <property type="entry name" value="SAM-dependent_MTases_sf"/>
</dbReference>
<dbReference type="NCBIfam" id="TIGR00138">
    <property type="entry name" value="rsmG_gidB"/>
    <property type="match status" value="1"/>
</dbReference>
<dbReference type="PANTHER" id="PTHR31760">
    <property type="entry name" value="S-ADENOSYL-L-METHIONINE-DEPENDENT METHYLTRANSFERASES SUPERFAMILY PROTEIN"/>
    <property type="match status" value="1"/>
</dbReference>
<dbReference type="PANTHER" id="PTHR31760:SF0">
    <property type="entry name" value="S-ADENOSYL-L-METHIONINE-DEPENDENT METHYLTRANSFERASES SUPERFAMILY PROTEIN"/>
    <property type="match status" value="1"/>
</dbReference>
<dbReference type="Pfam" id="PF02527">
    <property type="entry name" value="GidB"/>
    <property type="match status" value="1"/>
</dbReference>
<dbReference type="PIRSF" id="PIRSF003078">
    <property type="entry name" value="GidB"/>
    <property type="match status" value="1"/>
</dbReference>
<dbReference type="SUPFAM" id="SSF53335">
    <property type="entry name" value="S-adenosyl-L-methionine-dependent methyltransferases"/>
    <property type="match status" value="1"/>
</dbReference>
<organism>
    <name type="scientific">Escherichia fergusonii (strain ATCC 35469 / DSM 13698 / CCUG 18766 / IAM 14443 / JCM 21226 / LMG 7866 / NBRC 102419 / NCTC 12128 / CDC 0568-73)</name>
    <dbReference type="NCBI Taxonomy" id="585054"/>
    <lineage>
        <taxon>Bacteria</taxon>
        <taxon>Pseudomonadati</taxon>
        <taxon>Pseudomonadota</taxon>
        <taxon>Gammaproteobacteria</taxon>
        <taxon>Enterobacterales</taxon>
        <taxon>Enterobacteriaceae</taxon>
        <taxon>Escherichia</taxon>
    </lineage>
</organism>
<protein>
    <recommendedName>
        <fullName evidence="1">Ribosomal RNA small subunit methyltransferase G</fullName>
        <ecNumber evidence="1">2.1.1.170</ecNumber>
    </recommendedName>
    <alternativeName>
        <fullName evidence="1">16S rRNA 7-methylguanosine methyltransferase</fullName>
        <shortName evidence="1">16S rRNA m7G methyltransferase</shortName>
    </alternativeName>
</protein>
<reference key="1">
    <citation type="journal article" date="2009" name="PLoS Genet.">
        <title>Organised genome dynamics in the Escherichia coli species results in highly diverse adaptive paths.</title>
        <authorList>
            <person name="Touchon M."/>
            <person name="Hoede C."/>
            <person name="Tenaillon O."/>
            <person name="Barbe V."/>
            <person name="Baeriswyl S."/>
            <person name="Bidet P."/>
            <person name="Bingen E."/>
            <person name="Bonacorsi S."/>
            <person name="Bouchier C."/>
            <person name="Bouvet O."/>
            <person name="Calteau A."/>
            <person name="Chiapello H."/>
            <person name="Clermont O."/>
            <person name="Cruveiller S."/>
            <person name="Danchin A."/>
            <person name="Diard M."/>
            <person name="Dossat C."/>
            <person name="Karoui M.E."/>
            <person name="Frapy E."/>
            <person name="Garry L."/>
            <person name="Ghigo J.M."/>
            <person name="Gilles A.M."/>
            <person name="Johnson J."/>
            <person name="Le Bouguenec C."/>
            <person name="Lescat M."/>
            <person name="Mangenot S."/>
            <person name="Martinez-Jehanne V."/>
            <person name="Matic I."/>
            <person name="Nassif X."/>
            <person name="Oztas S."/>
            <person name="Petit M.A."/>
            <person name="Pichon C."/>
            <person name="Rouy Z."/>
            <person name="Ruf C.S."/>
            <person name="Schneider D."/>
            <person name="Tourret J."/>
            <person name="Vacherie B."/>
            <person name="Vallenet D."/>
            <person name="Medigue C."/>
            <person name="Rocha E.P.C."/>
            <person name="Denamur E."/>
        </authorList>
    </citation>
    <scope>NUCLEOTIDE SEQUENCE [LARGE SCALE GENOMIC DNA]</scope>
    <source>
        <strain>ATCC 35469 / DSM 13698 / BCRC 15582 / CCUG 18766 / IAM 14443 / JCM 21226 / LMG 7866 / NBRC 102419 / NCTC 12128 / CDC 0568-73</strain>
    </source>
</reference>
<evidence type="ECO:0000255" key="1">
    <source>
        <dbReference type="HAMAP-Rule" id="MF_00074"/>
    </source>
</evidence>
<gene>
    <name evidence="1" type="primary">rsmG</name>
    <name type="ordered locus">EFER_4039</name>
</gene>